<accession>C1FZ35</accession>
<evidence type="ECO:0000255" key="1">
    <source>
        <dbReference type="HAMAP-Rule" id="MF_03139"/>
    </source>
</evidence>
<name>CYNS_PARBD</name>
<gene>
    <name evidence="1" type="primary">CYN1</name>
    <name type="ORF">PADG_01061</name>
</gene>
<sequence>MSNINLATLDISEHPNLPSSSAVLFEAKAKKKLSFEAIASAIGRNEVATAAIFYGQAKASAEDIVKLSEVLGIDHLYLESLLSGFPDRGKSMTFPPKDPLIYRLFEIVQNYGYAYKAVMNEKFGDGIMSAISFSTKVEKETDLDGNNWAVVTWRGKWLPYSRF</sequence>
<reference key="1">
    <citation type="journal article" date="2011" name="PLoS Genet.">
        <title>Comparative genomic analysis of human fungal pathogens causing paracoccidioidomycosis.</title>
        <authorList>
            <person name="Desjardins C.A."/>
            <person name="Champion M.D."/>
            <person name="Holder J.W."/>
            <person name="Muszewska A."/>
            <person name="Goldberg J."/>
            <person name="Bailao A.M."/>
            <person name="Brigido M.M."/>
            <person name="Ferreira M.E."/>
            <person name="Garcia A.M."/>
            <person name="Grynberg M."/>
            <person name="Gujja S."/>
            <person name="Heiman D.I."/>
            <person name="Henn M.R."/>
            <person name="Kodira C.D."/>
            <person name="Leon-Narvaez H."/>
            <person name="Longo L.V.G."/>
            <person name="Ma L.-J."/>
            <person name="Malavazi I."/>
            <person name="Matsuo A.L."/>
            <person name="Morais F.V."/>
            <person name="Pereira M."/>
            <person name="Rodriguez-Brito S."/>
            <person name="Sakthikumar S."/>
            <person name="Salem-Izacc S.M."/>
            <person name="Sykes S.M."/>
            <person name="Teixeira M.M."/>
            <person name="Vallejo M.C."/>
            <person name="Walter M.E."/>
            <person name="Yandava C."/>
            <person name="Young S."/>
            <person name="Zeng Q."/>
            <person name="Zucker J."/>
            <person name="Felipe M.S."/>
            <person name="Goldman G.H."/>
            <person name="Haas B.J."/>
            <person name="McEwen J.G."/>
            <person name="Nino-Vega G."/>
            <person name="Puccia R."/>
            <person name="San-Blas G."/>
            <person name="Soares C.M."/>
            <person name="Birren B.W."/>
            <person name="Cuomo C.A."/>
        </authorList>
    </citation>
    <scope>NUCLEOTIDE SEQUENCE [LARGE SCALE GENOMIC DNA]</scope>
    <source>
        <strain>Pb18</strain>
    </source>
</reference>
<proteinExistence type="inferred from homology"/>
<dbReference type="EC" id="4.2.1.104" evidence="1"/>
<dbReference type="EMBL" id="KN275957">
    <property type="protein sequence ID" value="EEH44772.1"/>
    <property type="molecule type" value="Genomic_DNA"/>
</dbReference>
<dbReference type="RefSeq" id="XP_010756593.1">
    <property type="nucleotide sequence ID" value="XM_010758291.1"/>
</dbReference>
<dbReference type="SMR" id="C1FZ35"/>
<dbReference type="STRING" id="502780.C1FZ35"/>
<dbReference type="GeneID" id="22580795"/>
<dbReference type="KEGG" id="pbn:PADG_01061"/>
<dbReference type="VEuPathDB" id="FungiDB:PADG_01061"/>
<dbReference type="eggNOG" id="ENOG502S3YJ">
    <property type="taxonomic scope" value="Eukaryota"/>
</dbReference>
<dbReference type="HOGENOM" id="CLU_103452_0_0_1"/>
<dbReference type="InParanoid" id="C1FZ35"/>
<dbReference type="OMA" id="YELVMIN"/>
<dbReference type="OrthoDB" id="27731at33183"/>
<dbReference type="Proteomes" id="UP000001628">
    <property type="component" value="Unassembled WGS sequence"/>
</dbReference>
<dbReference type="GO" id="GO:0008824">
    <property type="term" value="F:cyanate hydratase activity"/>
    <property type="evidence" value="ECO:0007669"/>
    <property type="project" value="UniProtKB-UniRule"/>
</dbReference>
<dbReference type="GO" id="GO:0003677">
    <property type="term" value="F:DNA binding"/>
    <property type="evidence" value="ECO:0007669"/>
    <property type="project" value="InterPro"/>
</dbReference>
<dbReference type="GO" id="GO:0009439">
    <property type="term" value="P:cyanate metabolic process"/>
    <property type="evidence" value="ECO:0007669"/>
    <property type="project" value="UniProtKB-UniRule"/>
</dbReference>
<dbReference type="CDD" id="cd00559">
    <property type="entry name" value="Cyanase_C"/>
    <property type="match status" value="1"/>
</dbReference>
<dbReference type="Gene3D" id="3.30.1160.10">
    <property type="entry name" value="Cyanate lyase, C-terminal domain"/>
    <property type="match status" value="1"/>
</dbReference>
<dbReference type="Gene3D" id="1.10.260.40">
    <property type="entry name" value="lambda repressor-like DNA-binding domains"/>
    <property type="match status" value="1"/>
</dbReference>
<dbReference type="HAMAP" id="MF_00535">
    <property type="entry name" value="Cyanate_hydrat"/>
    <property type="match status" value="1"/>
</dbReference>
<dbReference type="InterPro" id="IPR008076">
    <property type="entry name" value="Cyanase"/>
</dbReference>
<dbReference type="InterPro" id="IPR003712">
    <property type="entry name" value="Cyanate_lyase_C"/>
</dbReference>
<dbReference type="InterPro" id="IPR036581">
    <property type="entry name" value="Cyanate_lyase_C_sf"/>
</dbReference>
<dbReference type="InterPro" id="IPR010982">
    <property type="entry name" value="Lambda_DNA-bd_dom_sf"/>
</dbReference>
<dbReference type="NCBIfam" id="TIGR00673">
    <property type="entry name" value="cynS"/>
    <property type="match status" value="1"/>
</dbReference>
<dbReference type="PANTHER" id="PTHR34186">
    <property type="entry name" value="CYANATE HYDRATASE"/>
    <property type="match status" value="1"/>
</dbReference>
<dbReference type="PANTHER" id="PTHR34186:SF2">
    <property type="entry name" value="CYANATE HYDRATASE"/>
    <property type="match status" value="1"/>
</dbReference>
<dbReference type="Pfam" id="PF02560">
    <property type="entry name" value="Cyanate_lyase"/>
    <property type="match status" value="1"/>
</dbReference>
<dbReference type="PIRSF" id="PIRSF001263">
    <property type="entry name" value="Cyanate_hydratas"/>
    <property type="match status" value="1"/>
</dbReference>
<dbReference type="PRINTS" id="PR01693">
    <property type="entry name" value="CYANASE"/>
</dbReference>
<dbReference type="SMART" id="SM01116">
    <property type="entry name" value="Cyanate_lyase"/>
    <property type="match status" value="1"/>
</dbReference>
<dbReference type="SUPFAM" id="SSF55234">
    <property type="entry name" value="Cyanase C-terminal domain"/>
    <property type="match status" value="1"/>
</dbReference>
<dbReference type="SUPFAM" id="SSF47413">
    <property type="entry name" value="lambda repressor-like DNA-binding domains"/>
    <property type="match status" value="1"/>
</dbReference>
<feature type="chain" id="PRO_0000403260" description="Cyanate hydratase">
    <location>
        <begin position="1"/>
        <end position="163"/>
    </location>
</feature>
<feature type="active site" evidence="1">
    <location>
        <position position="103"/>
    </location>
</feature>
<feature type="active site" evidence="1">
    <location>
        <position position="106"/>
    </location>
</feature>
<feature type="active site" evidence="1">
    <location>
        <position position="129"/>
    </location>
</feature>
<keyword id="KW-0456">Lyase</keyword>
<keyword id="KW-1185">Reference proteome</keyword>
<comment type="function">
    <text evidence="1">Catalyzes the reaction of cyanate with bicarbonate to produce ammonia and carbon dioxide.</text>
</comment>
<comment type="catalytic activity">
    <reaction evidence="1">
        <text>cyanate + hydrogencarbonate + 3 H(+) = NH4(+) + 2 CO2</text>
        <dbReference type="Rhea" id="RHEA:11120"/>
        <dbReference type="ChEBI" id="CHEBI:15378"/>
        <dbReference type="ChEBI" id="CHEBI:16526"/>
        <dbReference type="ChEBI" id="CHEBI:17544"/>
        <dbReference type="ChEBI" id="CHEBI:28938"/>
        <dbReference type="ChEBI" id="CHEBI:29195"/>
        <dbReference type="EC" id="4.2.1.104"/>
    </reaction>
</comment>
<comment type="similarity">
    <text evidence="1">Belongs to the cyanase family.</text>
</comment>
<protein>
    <recommendedName>
        <fullName evidence="1">Cyanate hydratase</fullName>
        <shortName evidence="1">Cyanase</shortName>
        <ecNumber evidence="1">4.2.1.104</ecNumber>
    </recommendedName>
    <alternativeName>
        <fullName evidence="1">Cyanate hydrolase</fullName>
    </alternativeName>
    <alternativeName>
        <fullName evidence="1">Cyanate lyase</fullName>
    </alternativeName>
</protein>
<organism>
    <name type="scientific">Paracoccidioides brasiliensis (strain Pb18)</name>
    <dbReference type="NCBI Taxonomy" id="502780"/>
    <lineage>
        <taxon>Eukaryota</taxon>
        <taxon>Fungi</taxon>
        <taxon>Dikarya</taxon>
        <taxon>Ascomycota</taxon>
        <taxon>Pezizomycotina</taxon>
        <taxon>Eurotiomycetes</taxon>
        <taxon>Eurotiomycetidae</taxon>
        <taxon>Onygenales</taxon>
        <taxon>Ajellomycetaceae</taxon>
        <taxon>Paracoccidioides</taxon>
    </lineage>
</organism>